<dbReference type="EC" id="5.3.1.9" evidence="1"/>
<dbReference type="EMBL" id="CP001154">
    <property type="protein sequence ID" value="ACO75300.1"/>
    <property type="molecule type" value="Genomic_DNA"/>
</dbReference>
<dbReference type="RefSeq" id="WP_012697786.1">
    <property type="nucleotide sequence ID" value="NC_012559.1"/>
</dbReference>
<dbReference type="SMR" id="C1DAI5"/>
<dbReference type="STRING" id="557598.LHK_02316"/>
<dbReference type="GeneID" id="75110974"/>
<dbReference type="KEGG" id="lhk:LHK_02316"/>
<dbReference type="eggNOG" id="COG0166">
    <property type="taxonomic scope" value="Bacteria"/>
</dbReference>
<dbReference type="HOGENOM" id="CLU_017947_3_1_4"/>
<dbReference type="UniPathway" id="UPA00109">
    <property type="reaction ID" value="UER00181"/>
</dbReference>
<dbReference type="UniPathway" id="UPA00138"/>
<dbReference type="Proteomes" id="UP000002010">
    <property type="component" value="Chromosome"/>
</dbReference>
<dbReference type="GO" id="GO:0005829">
    <property type="term" value="C:cytosol"/>
    <property type="evidence" value="ECO:0007669"/>
    <property type="project" value="TreeGrafter"/>
</dbReference>
<dbReference type="GO" id="GO:0097367">
    <property type="term" value="F:carbohydrate derivative binding"/>
    <property type="evidence" value="ECO:0007669"/>
    <property type="project" value="InterPro"/>
</dbReference>
<dbReference type="GO" id="GO:0004347">
    <property type="term" value="F:glucose-6-phosphate isomerase activity"/>
    <property type="evidence" value="ECO:0007669"/>
    <property type="project" value="UniProtKB-UniRule"/>
</dbReference>
<dbReference type="GO" id="GO:0048029">
    <property type="term" value="F:monosaccharide binding"/>
    <property type="evidence" value="ECO:0007669"/>
    <property type="project" value="TreeGrafter"/>
</dbReference>
<dbReference type="GO" id="GO:0006094">
    <property type="term" value="P:gluconeogenesis"/>
    <property type="evidence" value="ECO:0007669"/>
    <property type="project" value="UniProtKB-UniRule"/>
</dbReference>
<dbReference type="GO" id="GO:0051156">
    <property type="term" value="P:glucose 6-phosphate metabolic process"/>
    <property type="evidence" value="ECO:0007669"/>
    <property type="project" value="TreeGrafter"/>
</dbReference>
<dbReference type="GO" id="GO:0006096">
    <property type="term" value="P:glycolytic process"/>
    <property type="evidence" value="ECO:0007669"/>
    <property type="project" value="UniProtKB-UniRule"/>
</dbReference>
<dbReference type="CDD" id="cd05015">
    <property type="entry name" value="SIS_PGI_1"/>
    <property type="match status" value="1"/>
</dbReference>
<dbReference type="CDD" id="cd05016">
    <property type="entry name" value="SIS_PGI_2"/>
    <property type="match status" value="1"/>
</dbReference>
<dbReference type="FunFam" id="1.10.1390.10:FF:000001">
    <property type="entry name" value="Glucose-6-phosphate isomerase"/>
    <property type="match status" value="1"/>
</dbReference>
<dbReference type="Gene3D" id="1.10.1390.10">
    <property type="match status" value="1"/>
</dbReference>
<dbReference type="Gene3D" id="3.40.50.10490">
    <property type="entry name" value="Glucose-6-phosphate isomerase like protein, domain 1"/>
    <property type="match status" value="2"/>
</dbReference>
<dbReference type="HAMAP" id="MF_00473">
    <property type="entry name" value="G6P_isomerase"/>
    <property type="match status" value="1"/>
</dbReference>
<dbReference type="InterPro" id="IPR001672">
    <property type="entry name" value="G6P_Isomerase"/>
</dbReference>
<dbReference type="InterPro" id="IPR023096">
    <property type="entry name" value="G6P_Isomerase_C"/>
</dbReference>
<dbReference type="InterPro" id="IPR018189">
    <property type="entry name" value="Phosphoglucose_isomerase_CS"/>
</dbReference>
<dbReference type="InterPro" id="IPR046348">
    <property type="entry name" value="SIS_dom_sf"/>
</dbReference>
<dbReference type="InterPro" id="IPR035476">
    <property type="entry name" value="SIS_PGI_1"/>
</dbReference>
<dbReference type="InterPro" id="IPR035482">
    <property type="entry name" value="SIS_PGI_2"/>
</dbReference>
<dbReference type="NCBIfam" id="NF001211">
    <property type="entry name" value="PRK00179.1"/>
    <property type="match status" value="1"/>
</dbReference>
<dbReference type="PANTHER" id="PTHR11469">
    <property type="entry name" value="GLUCOSE-6-PHOSPHATE ISOMERASE"/>
    <property type="match status" value="1"/>
</dbReference>
<dbReference type="PANTHER" id="PTHR11469:SF1">
    <property type="entry name" value="GLUCOSE-6-PHOSPHATE ISOMERASE"/>
    <property type="match status" value="1"/>
</dbReference>
<dbReference type="Pfam" id="PF00342">
    <property type="entry name" value="PGI"/>
    <property type="match status" value="1"/>
</dbReference>
<dbReference type="PRINTS" id="PR00662">
    <property type="entry name" value="G6PISOMERASE"/>
</dbReference>
<dbReference type="SUPFAM" id="SSF53697">
    <property type="entry name" value="SIS domain"/>
    <property type="match status" value="1"/>
</dbReference>
<dbReference type="PROSITE" id="PS00765">
    <property type="entry name" value="P_GLUCOSE_ISOMERASE_1"/>
    <property type="match status" value="1"/>
</dbReference>
<dbReference type="PROSITE" id="PS00174">
    <property type="entry name" value="P_GLUCOSE_ISOMERASE_2"/>
    <property type="match status" value="1"/>
</dbReference>
<dbReference type="PROSITE" id="PS51463">
    <property type="entry name" value="P_GLUCOSE_ISOMERASE_3"/>
    <property type="match status" value="1"/>
</dbReference>
<keyword id="KW-0963">Cytoplasm</keyword>
<keyword id="KW-0312">Gluconeogenesis</keyword>
<keyword id="KW-0324">Glycolysis</keyword>
<keyword id="KW-0413">Isomerase</keyword>
<keyword id="KW-1185">Reference proteome</keyword>
<evidence type="ECO:0000255" key="1">
    <source>
        <dbReference type="HAMAP-Rule" id="MF_00473"/>
    </source>
</evidence>
<evidence type="ECO:0000256" key="2">
    <source>
        <dbReference type="SAM" id="MobiDB-lite"/>
    </source>
</evidence>
<sequence>MRFQSINEINLTSVWAQLHLHQRSTRHVEMRDLFEAESDRFLNFSIDLNGFLLDFSKNRITGRSLDLLVELSKVAGLSDWVEAARLGEQINTSEHRAVMHFALRASVDDVYSVDGQNVVPVVHRELRRCFDFSEKIRQKIWCGFNGSPIRDVVNIGIGGSDLGPRLAVQALHPYALSDIRVHFVSNLDGADLAQTLEGLDQATTLFIVSSKSFSTPETLDNAYAAKAWFLQKAQGSDVSKHFVAISSNVEAVKDFGIAPEQMFRFWDWVGGRYSVWSAIGLSVMIAIGERHFRAFLDGAREMDQHFFTAPHEKNIPVVMALLGVWYNTFYGAHTHAIMPYAHGLARLPAYLQQLDMESNGKRVGRFGEMLDFDTGPVVWGEVGVNSQHAFFQLLHQGTRLVPCDFILPLRSHYAIGQHHQQLVANCLAQTEALMRGKTDTEVLEELQAAGVTGELLDALLPQKVFPGNQPSNTIVIDELSPHFLGMLLAAYEHKVFVQGVIWGINSFDQWGVEYGKQLAKRIAPELASTKPPKHDSSTNALIERYRTRGCRS</sequence>
<accession>C1DAI5</accession>
<protein>
    <recommendedName>
        <fullName evidence="1">Glucose-6-phosphate isomerase</fullName>
        <shortName evidence="1">GPI</shortName>
        <ecNumber evidence="1">5.3.1.9</ecNumber>
    </recommendedName>
    <alternativeName>
        <fullName evidence="1">Phosphoglucose isomerase</fullName>
        <shortName evidence="1">PGI</shortName>
    </alternativeName>
    <alternativeName>
        <fullName evidence="1">Phosphohexose isomerase</fullName>
        <shortName evidence="1">PHI</shortName>
    </alternativeName>
</protein>
<name>G6PI_LARHH</name>
<reference key="1">
    <citation type="journal article" date="2009" name="PLoS Genet.">
        <title>The complete genome and proteome of Laribacter hongkongensis reveal potential mechanisms for adaptations to different temperatures and habitats.</title>
        <authorList>
            <person name="Woo P.C.Y."/>
            <person name="Lau S.K.P."/>
            <person name="Tse H."/>
            <person name="Teng J.L.L."/>
            <person name="Curreem S.O."/>
            <person name="Tsang A.K.L."/>
            <person name="Fan R.Y.Y."/>
            <person name="Wong G.K.M."/>
            <person name="Huang Y."/>
            <person name="Loman N.J."/>
            <person name="Snyder L.A.S."/>
            <person name="Cai J.J."/>
            <person name="Huang J.-D."/>
            <person name="Mak W."/>
            <person name="Pallen M.J."/>
            <person name="Lok S."/>
            <person name="Yuen K.-Y."/>
        </authorList>
    </citation>
    <scope>NUCLEOTIDE SEQUENCE [LARGE SCALE GENOMIC DNA]</scope>
    <source>
        <strain>HLHK9</strain>
    </source>
</reference>
<feature type="chain" id="PRO_1000135533" description="Glucose-6-phosphate isomerase">
    <location>
        <begin position="1"/>
        <end position="552"/>
    </location>
</feature>
<feature type="region of interest" description="Disordered" evidence="2">
    <location>
        <begin position="525"/>
        <end position="552"/>
    </location>
</feature>
<feature type="active site" description="Proton donor" evidence="1">
    <location>
        <position position="357"/>
    </location>
</feature>
<feature type="active site" evidence="1">
    <location>
        <position position="388"/>
    </location>
</feature>
<feature type="active site" evidence="1">
    <location>
        <position position="516"/>
    </location>
</feature>
<gene>
    <name evidence="1" type="primary">pgi</name>
    <name type="ordered locus">LHK_02316</name>
</gene>
<proteinExistence type="inferred from homology"/>
<comment type="function">
    <text evidence="1">Catalyzes the reversible isomerization of glucose-6-phosphate to fructose-6-phosphate.</text>
</comment>
<comment type="catalytic activity">
    <reaction evidence="1">
        <text>alpha-D-glucose 6-phosphate = beta-D-fructose 6-phosphate</text>
        <dbReference type="Rhea" id="RHEA:11816"/>
        <dbReference type="ChEBI" id="CHEBI:57634"/>
        <dbReference type="ChEBI" id="CHEBI:58225"/>
        <dbReference type="EC" id="5.3.1.9"/>
    </reaction>
</comment>
<comment type="pathway">
    <text evidence="1">Carbohydrate biosynthesis; gluconeogenesis.</text>
</comment>
<comment type="pathway">
    <text evidence="1">Carbohydrate degradation; glycolysis; D-glyceraldehyde 3-phosphate and glycerone phosphate from D-glucose: step 2/4.</text>
</comment>
<comment type="subcellular location">
    <subcellularLocation>
        <location evidence="1">Cytoplasm</location>
    </subcellularLocation>
</comment>
<comment type="similarity">
    <text evidence="1">Belongs to the GPI family.</text>
</comment>
<organism>
    <name type="scientific">Laribacter hongkongensis (strain HLHK9)</name>
    <dbReference type="NCBI Taxonomy" id="557598"/>
    <lineage>
        <taxon>Bacteria</taxon>
        <taxon>Pseudomonadati</taxon>
        <taxon>Pseudomonadota</taxon>
        <taxon>Betaproteobacteria</taxon>
        <taxon>Neisseriales</taxon>
        <taxon>Aquaspirillaceae</taxon>
        <taxon>Laribacter</taxon>
    </lineage>
</organism>